<keyword id="KW-0963">Cytoplasm</keyword>
<keyword id="KW-0342">GTP-binding</keyword>
<keyword id="KW-0436">Ligase</keyword>
<keyword id="KW-0460">Magnesium</keyword>
<keyword id="KW-0479">Metal-binding</keyword>
<keyword id="KW-0547">Nucleotide-binding</keyword>
<keyword id="KW-0658">Purine biosynthesis</keyword>
<keyword id="KW-1185">Reference proteome</keyword>
<sequence>MPGIAIVGAQWGDEGKGKITDFLAPEAEFVVRYQGGANAGHTVTAKGQTFKLNLLPSGVLHEGTVSVLGDGMVIDADKFMEERRNLIAGGLNPELRISDRAHLVLPHHKYVDGRKDFVGTTGRGIGPAYADRARRVGVRFGDLSDDTVLRERLERLLEAKPNSTRDAGWTSVDVAMESLAPIREALLPFVQDTGSQLRAAITEGRNVLFEGAQATLLDLNYGTYPFVTSSHPTVGGILVGAGVNHKAIHKVYGVAKAFNTRVGHGPFVTEVLGDAEILRLRGDGSKPWDEFGTTTGRARRVGWLDLHLLKYAVEVNGLDGLVINKMDILSGMDSIPVCVSYDAAGEPVYKHMKGWATTDGADSRASLPREAQAYLDLIEETVGCPVVIFSAGPAREQTYGSVSWT</sequence>
<gene>
    <name evidence="1" type="primary">purA</name>
    <name type="ordered locus">Deide_02690</name>
</gene>
<accession>C1CZ40</accession>
<comment type="function">
    <text evidence="1">Plays an important role in the de novo pathway of purine nucleotide biosynthesis. Catalyzes the first committed step in the biosynthesis of AMP from IMP.</text>
</comment>
<comment type="catalytic activity">
    <reaction evidence="1">
        <text>IMP + L-aspartate + GTP = N(6)-(1,2-dicarboxyethyl)-AMP + GDP + phosphate + 2 H(+)</text>
        <dbReference type="Rhea" id="RHEA:15753"/>
        <dbReference type="ChEBI" id="CHEBI:15378"/>
        <dbReference type="ChEBI" id="CHEBI:29991"/>
        <dbReference type="ChEBI" id="CHEBI:37565"/>
        <dbReference type="ChEBI" id="CHEBI:43474"/>
        <dbReference type="ChEBI" id="CHEBI:57567"/>
        <dbReference type="ChEBI" id="CHEBI:58053"/>
        <dbReference type="ChEBI" id="CHEBI:58189"/>
        <dbReference type="EC" id="6.3.4.4"/>
    </reaction>
</comment>
<comment type="cofactor">
    <cofactor evidence="1">
        <name>Mg(2+)</name>
        <dbReference type="ChEBI" id="CHEBI:18420"/>
    </cofactor>
    <text evidence="1">Binds 1 Mg(2+) ion per subunit.</text>
</comment>
<comment type="pathway">
    <text evidence="1">Purine metabolism; AMP biosynthesis via de novo pathway; AMP from IMP: step 1/2.</text>
</comment>
<comment type="subunit">
    <text evidence="1">Homodimer.</text>
</comment>
<comment type="subcellular location">
    <subcellularLocation>
        <location evidence="1">Cytoplasm</location>
    </subcellularLocation>
</comment>
<comment type="similarity">
    <text evidence="1">Belongs to the adenylosuccinate synthetase family.</text>
</comment>
<dbReference type="EC" id="6.3.4.4" evidence="1"/>
<dbReference type="EMBL" id="CP001114">
    <property type="protein sequence ID" value="ACO45078.1"/>
    <property type="molecule type" value="Genomic_DNA"/>
</dbReference>
<dbReference type="RefSeq" id="WP_012692201.1">
    <property type="nucleotide sequence ID" value="NC_012526.1"/>
</dbReference>
<dbReference type="SMR" id="C1CZ40"/>
<dbReference type="STRING" id="546414.Deide_02690"/>
<dbReference type="PaxDb" id="546414-Deide_02690"/>
<dbReference type="KEGG" id="ddr:Deide_02690"/>
<dbReference type="eggNOG" id="COG0104">
    <property type="taxonomic scope" value="Bacteria"/>
</dbReference>
<dbReference type="HOGENOM" id="CLU_029848_0_0_0"/>
<dbReference type="OrthoDB" id="9807553at2"/>
<dbReference type="UniPathway" id="UPA00075">
    <property type="reaction ID" value="UER00335"/>
</dbReference>
<dbReference type="Proteomes" id="UP000002208">
    <property type="component" value="Chromosome"/>
</dbReference>
<dbReference type="GO" id="GO:0005737">
    <property type="term" value="C:cytoplasm"/>
    <property type="evidence" value="ECO:0007669"/>
    <property type="project" value="UniProtKB-SubCell"/>
</dbReference>
<dbReference type="GO" id="GO:0004019">
    <property type="term" value="F:adenylosuccinate synthase activity"/>
    <property type="evidence" value="ECO:0007669"/>
    <property type="project" value="UniProtKB-UniRule"/>
</dbReference>
<dbReference type="GO" id="GO:0005525">
    <property type="term" value="F:GTP binding"/>
    <property type="evidence" value="ECO:0007669"/>
    <property type="project" value="UniProtKB-UniRule"/>
</dbReference>
<dbReference type="GO" id="GO:0000287">
    <property type="term" value="F:magnesium ion binding"/>
    <property type="evidence" value="ECO:0007669"/>
    <property type="project" value="UniProtKB-UniRule"/>
</dbReference>
<dbReference type="GO" id="GO:0044208">
    <property type="term" value="P:'de novo' AMP biosynthetic process"/>
    <property type="evidence" value="ECO:0007669"/>
    <property type="project" value="UniProtKB-UniRule"/>
</dbReference>
<dbReference type="GO" id="GO:0046040">
    <property type="term" value="P:IMP metabolic process"/>
    <property type="evidence" value="ECO:0007669"/>
    <property type="project" value="TreeGrafter"/>
</dbReference>
<dbReference type="CDD" id="cd03108">
    <property type="entry name" value="AdSS"/>
    <property type="match status" value="1"/>
</dbReference>
<dbReference type="Gene3D" id="3.40.440.10">
    <property type="entry name" value="Adenylosuccinate Synthetase, subunit A, domain 1"/>
    <property type="match status" value="1"/>
</dbReference>
<dbReference type="Gene3D" id="1.10.300.10">
    <property type="entry name" value="Adenylosuccinate Synthetase, subunit A, domain 2"/>
    <property type="match status" value="1"/>
</dbReference>
<dbReference type="Gene3D" id="3.90.170.10">
    <property type="entry name" value="Adenylosuccinate Synthetase, subunit A, domain 3"/>
    <property type="match status" value="2"/>
</dbReference>
<dbReference type="HAMAP" id="MF_00011">
    <property type="entry name" value="Adenylosucc_synth"/>
    <property type="match status" value="1"/>
</dbReference>
<dbReference type="InterPro" id="IPR018220">
    <property type="entry name" value="Adenylosuccin_syn_GTP-bd"/>
</dbReference>
<dbReference type="InterPro" id="IPR042109">
    <property type="entry name" value="Adenylosuccinate_synth_dom1"/>
</dbReference>
<dbReference type="InterPro" id="IPR042110">
    <property type="entry name" value="Adenylosuccinate_synth_dom2"/>
</dbReference>
<dbReference type="InterPro" id="IPR042111">
    <property type="entry name" value="Adenylosuccinate_synth_dom3"/>
</dbReference>
<dbReference type="InterPro" id="IPR001114">
    <property type="entry name" value="Adenylosuccinate_synthetase"/>
</dbReference>
<dbReference type="InterPro" id="IPR027417">
    <property type="entry name" value="P-loop_NTPase"/>
</dbReference>
<dbReference type="NCBIfam" id="NF002223">
    <property type="entry name" value="PRK01117.1"/>
    <property type="match status" value="1"/>
</dbReference>
<dbReference type="NCBIfam" id="TIGR00184">
    <property type="entry name" value="purA"/>
    <property type="match status" value="1"/>
</dbReference>
<dbReference type="PANTHER" id="PTHR11846">
    <property type="entry name" value="ADENYLOSUCCINATE SYNTHETASE"/>
    <property type="match status" value="1"/>
</dbReference>
<dbReference type="PANTHER" id="PTHR11846:SF0">
    <property type="entry name" value="ADENYLOSUCCINATE SYNTHETASE"/>
    <property type="match status" value="1"/>
</dbReference>
<dbReference type="Pfam" id="PF00709">
    <property type="entry name" value="Adenylsucc_synt"/>
    <property type="match status" value="1"/>
</dbReference>
<dbReference type="SMART" id="SM00788">
    <property type="entry name" value="Adenylsucc_synt"/>
    <property type="match status" value="1"/>
</dbReference>
<dbReference type="SUPFAM" id="SSF52540">
    <property type="entry name" value="P-loop containing nucleoside triphosphate hydrolases"/>
    <property type="match status" value="1"/>
</dbReference>
<dbReference type="PROSITE" id="PS01266">
    <property type="entry name" value="ADENYLOSUCCIN_SYN_1"/>
    <property type="match status" value="1"/>
</dbReference>
<organism>
    <name type="scientific">Deinococcus deserti (strain DSM 17065 / CIP 109153 / LMG 22923 / VCD115)</name>
    <dbReference type="NCBI Taxonomy" id="546414"/>
    <lineage>
        <taxon>Bacteria</taxon>
        <taxon>Thermotogati</taxon>
        <taxon>Deinococcota</taxon>
        <taxon>Deinococci</taxon>
        <taxon>Deinococcales</taxon>
        <taxon>Deinococcaceae</taxon>
        <taxon>Deinococcus</taxon>
    </lineage>
</organism>
<proteinExistence type="inferred from homology"/>
<feature type="chain" id="PRO_1000201752" description="Adenylosuccinate synthetase">
    <location>
        <begin position="1"/>
        <end position="405"/>
    </location>
</feature>
<feature type="active site" description="Proton acceptor" evidence="1">
    <location>
        <position position="13"/>
    </location>
</feature>
<feature type="active site" description="Proton donor" evidence="1">
    <location>
        <position position="41"/>
    </location>
</feature>
<feature type="binding site" evidence="1">
    <location>
        <begin position="12"/>
        <end position="18"/>
    </location>
    <ligand>
        <name>GTP</name>
        <dbReference type="ChEBI" id="CHEBI:37565"/>
    </ligand>
</feature>
<feature type="binding site" description="in other chain" evidence="1">
    <location>
        <begin position="13"/>
        <end position="16"/>
    </location>
    <ligand>
        <name>IMP</name>
        <dbReference type="ChEBI" id="CHEBI:58053"/>
        <note>ligand shared between dimeric partners</note>
    </ligand>
</feature>
<feature type="binding site" evidence="1">
    <location>
        <position position="13"/>
    </location>
    <ligand>
        <name>Mg(2+)</name>
        <dbReference type="ChEBI" id="CHEBI:18420"/>
    </ligand>
</feature>
<feature type="binding site" description="in other chain" evidence="1">
    <location>
        <begin position="38"/>
        <end position="41"/>
    </location>
    <ligand>
        <name>IMP</name>
        <dbReference type="ChEBI" id="CHEBI:58053"/>
        <note>ligand shared between dimeric partners</note>
    </ligand>
</feature>
<feature type="binding site" evidence="1">
    <location>
        <begin position="40"/>
        <end position="42"/>
    </location>
    <ligand>
        <name>GTP</name>
        <dbReference type="ChEBI" id="CHEBI:37565"/>
    </ligand>
</feature>
<feature type="binding site" evidence="1">
    <location>
        <position position="40"/>
    </location>
    <ligand>
        <name>Mg(2+)</name>
        <dbReference type="ChEBI" id="CHEBI:18420"/>
    </ligand>
</feature>
<feature type="binding site" description="in other chain" evidence="1">
    <location>
        <position position="121"/>
    </location>
    <ligand>
        <name>IMP</name>
        <dbReference type="ChEBI" id="CHEBI:58053"/>
        <note>ligand shared between dimeric partners</note>
    </ligand>
</feature>
<feature type="binding site" evidence="1">
    <location>
        <position position="135"/>
    </location>
    <ligand>
        <name>IMP</name>
        <dbReference type="ChEBI" id="CHEBI:58053"/>
        <note>ligand shared between dimeric partners</note>
    </ligand>
</feature>
<feature type="binding site" description="in other chain" evidence="1">
    <location>
        <position position="213"/>
    </location>
    <ligand>
        <name>IMP</name>
        <dbReference type="ChEBI" id="CHEBI:58053"/>
        <note>ligand shared between dimeric partners</note>
    </ligand>
</feature>
<feature type="binding site" description="in other chain" evidence="1">
    <location>
        <position position="228"/>
    </location>
    <ligand>
        <name>IMP</name>
        <dbReference type="ChEBI" id="CHEBI:58053"/>
        <note>ligand shared between dimeric partners</note>
    </ligand>
</feature>
<feature type="binding site" evidence="1">
    <location>
        <begin position="293"/>
        <end position="299"/>
    </location>
    <ligand>
        <name>substrate</name>
    </ligand>
</feature>
<feature type="binding site" description="in other chain" evidence="1">
    <location>
        <position position="297"/>
    </location>
    <ligand>
        <name>IMP</name>
        <dbReference type="ChEBI" id="CHEBI:58053"/>
        <note>ligand shared between dimeric partners</note>
    </ligand>
</feature>
<feature type="binding site" evidence="1">
    <location>
        <position position="299"/>
    </location>
    <ligand>
        <name>GTP</name>
        <dbReference type="ChEBI" id="CHEBI:37565"/>
    </ligand>
</feature>
<feature type="binding site" evidence="1">
    <location>
        <begin position="325"/>
        <end position="327"/>
    </location>
    <ligand>
        <name>GTP</name>
        <dbReference type="ChEBI" id="CHEBI:37565"/>
    </ligand>
</feature>
<feature type="binding site" evidence="1">
    <location>
        <begin position="390"/>
        <end position="392"/>
    </location>
    <ligand>
        <name>GTP</name>
        <dbReference type="ChEBI" id="CHEBI:37565"/>
    </ligand>
</feature>
<name>PURA_DEIDV</name>
<evidence type="ECO:0000255" key="1">
    <source>
        <dbReference type="HAMAP-Rule" id="MF_00011"/>
    </source>
</evidence>
<reference key="1">
    <citation type="journal article" date="2009" name="PLoS Genet.">
        <title>Alliance of proteomics and genomics to unravel the specificities of Sahara bacterium Deinococcus deserti.</title>
        <authorList>
            <person name="de Groot A."/>
            <person name="Dulermo R."/>
            <person name="Ortet P."/>
            <person name="Blanchard L."/>
            <person name="Guerin P."/>
            <person name="Fernandez B."/>
            <person name="Vacherie B."/>
            <person name="Dossat C."/>
            <person name="Jolivet E."/>
            <person name="Siguier P."/>
            <person name="Chandler M."/>
            <person name="Barakat M."/>
            <person name="Dedieu A."/>
            <person name="Barbe V."/>
            <person name="Heulin T."/>
            <person name="Sommer S."/>
            <person name="Achouak W."/>
            <person name="Armengaud J."/>
        </authorList>
    </citation>
    <scope>NUCLEOTIDE SEQUENCE [LARGE SCALE GENOMIC DNA]</scope>
    <source>
        <strain>DSM 17065 / CIP 109153 / LMG 22923 / VCD115</strain>
    </source>
</reference>
<protein>
    <recommendedName>
        <fullName evidence="1">Adenylosuccinate synthetase</fullName>
        <shortName evidence="1">AMPSase</shortName>
        <shortName evidence="1">AdSS</shortName>
        <ecNumber evidence="1">6.3.4.4</ecNumber>
    </recommendedName>
    <alternativeName>
        <fullName evidence="1">IMP--aspartate ligase</fullName>
    </alternativeName>
</protein>